<keyword id="KW-0067">ATP-binding</keyword>
<keyword id="KW-0175">Coiled coil</keyword>
<keyword id="KW-0963">Cytoplasm</keyword>
<keyword id="KW-0206">Cytoskeleton</keyword>
<keyword id="KW-0493">Microtubule</keyword>
<keyword id="KW-0505">Motor protein</keyword>
<keyword id="KW-0547">Nucleotide-binding</keyword>
<keyword id="KW-1185">Reference proteome</keyword>
<proteinExistence type="evidence at protein level"/>
<dbReference type="EMBL" id="AF284333">
    <property type="protein sequence ID" value="AAG01844.1"/>
    <property type="molecule type" value="mRNA"/>
</dbReference>
<dbReference type="RefSeq" id="NP_999656.1">
    <property type="nucleotide sequence ID" value="NM_214491.1"/>
</dbReference>
<dbReference type="SMR" id="Q9GYZ0"/>
<dbReference type="STRING" id="7668.Q9GYZ0"/>
<dbReference type="GeneID" id="373236"/>
<dbReference type="KEGG" id="spu:373236"/>
<dbReference type="CTD" id="56992"/>
<dbReference type="eggNOG" id="KOG4280">
    <property type="taxonomic scope" value="Eukaryota"/>
</dbReference>
<dbReference type="InParanoid" id="Q9GYZ0"/>
<dbReference type="OrthoDB" id="3176171at2759"/>
<dbReference type="Proteomes" id="UP000007110">
    <property type="component" value="Unassembled WGS sequence"/>
</dbReference>
<dbReference type="GO" id="GO:0005737">
    <property type="term" value="C:cytoplasm"/>
    <property type="evidence" value="ECO:0000318"/>
    <property type="project" value="GO_Central"/>
</dbReference>
<dbReference type="GO" id="GO:0005871">
    <property type="term" value="C:kinesin complex"/>
    <property type="evidence" value="ECO:0000318"/>
    <property type="project" value="GO_Central"/>
</dbReference>
<dbReference type="GO" id="GO:0005874">
    <property type="term" value="C:microtubule"/>
    <property type="evidence" value="ECO:0000318"/>
    <property type="project" value="GO_Central"/>
</dbReference>
<dbReference type="GO" id="GO:0000922">
    <property type="term" value="C:spindle pole"/>
    <property type="evidence" value="ECO:0000250"/>
    <property type="project" value="UniProtKB"/>
</dbReference>
<dbReference type="GO" id="GO:0005524">
    <property type="term" value="F:ATP binding"/>
    <property type="evidence" value="ECO:0007669"/>
    <property type="project" value="UniProtKB-KW"/>
</dbReference>
<dbReference type="GO" id="GO:0016887">
    <property type="term" value="F:ATP hydrolysis activity"/>
    <property type="evidence" value="ECO:0000318"/>
    <property type="project" value="GO_Central"/>
</dbReference>
<dbReference type="GO" id="GO:0008017">
    <property type="term" value="F:microtubule binding"/>
    <property type="evidence" value="ECO:0000318"/>
    <property type="project" value="GO_Central"/>
</dbReference>
<dbReference type="GO" id="GO:0003777">
    <property type="term" value="F:microtubule motor activity"/>
    <property type="evidence" value="ECO:0000318"/>
    <property type="project" value="GO_Central"/>
</dbReference>
<dbReference type="GO" id="GO:0008574">
    <property type="term" value="F:plus-end-directed microtubule motor activity"/>
    <property type="evidence" value="ECO:0000250"/>
    <property type="project" value="UniProtKB"/>
</dbReference>
<dbReference type="GO" id="GO:0051299">
    <property type="term" value="P:centrosome separation"/>
    <property type="evidence" value="ECO:0000250"/>
    <property type="project" value="UniProtKB"/>
</dbReference>
<dbReference type="GO" id="GO:0007018">
    <property type="term" value="P:microtubule-based movement"/>
    <property type="evidence" value="ECO:0000318"/>
    <property type="project" value="GO_Central"/>
</dbReference>
<dbReference type="GO" id="GO:0090307">
    <property type="term" value="P:mitotic spindle assembly"/>
    <property type="evidence" value="ECO:0000250"/>
    <property type="project" value="UniProtKB"/>
</dbReference>
<dbReference type="CDD" id="cd01373">
    <property type="entry name" value="KISc_KLP2_like"/>
    <property type="match status" value="1"/>
</dbReference>
<dbReference type="FunFam" id="3.40.850.10:FF:000034">
    <property type="entry name" value="Kinesin family member 15"/>
    <property type="match status" value="1"/>
</dbReference>
<dbReference type="Gene3D" id="1.10.287.1490">
    <property type="match status" value="1"/>
</dbReference>
<dbReference type="Gene3D" id="3.40.850.10">
    <property type="entry name" value="Kinesin motor domain"/>
    <property type="match status" value="1"/>
</dbReference>
<dbReference type="InterPro" id="IPR044986">
    <property type="entry name" value="KIF15/KIN-12"/>
</dbReference>
<dbReference type="InterPro" id="IPR019821">
    <property type="entry name" value="Kinesin_motor_CS"/>
</dbReference>
<dbReference type="InterPro" id="IPR001752">
    <property type="entry name" value="Kinesin_motor_dom"/>
</dbReference>
<dbReference type="InterPro" id="IPR036961">
    <property type="entry name" value="Kinesin_motor_dom_sf"/>
</dbReference>
<dbReference type="InterPro" id="IPR027417">
    <property type="entry name" value="P-loop_NTPase"/>
</dbReference>
<dbReference type="PANTHER" id="PTHR37739">
    <property type="entry name" value="KINESIN-LIKE PROTEIN KIN-12D"/>
    <property type="match status" value="1"/>
</dbReference>
<dbReference type="PANTHER" id="PTHR37739:SF8">
    <property type="entry name" value="KINESIN-LIKE PROTEIN KIN-12D"/>
    <property type="match status" value="1"/>
</dbReference>
<dbReference type="Pfam" id="PF00225">
    <property type="entry name" value="Kinesin"/>
    <property type="match status" value="1"/>
</dbReference>
<dbReference type="PRINTS" id="PR00380">
    <property type="entry name" value="KINESINHEAVY"/>
</dbReference>
<dbReference type="SMART" id="SM00129">
    <property type="entry name" value="KISc"/>
    <property type="match status" value="1"/>
</dbReference>
<dbReference type="SUPFAM" id="SSF52540">
    <property type="entry name" value="P-loop containing nucleoside triphosphate hydrolases"/>
    <property type="match status" value="1"/>
</dbReference>
<dbReference type="PROSITE" id="PS00411">
    <property type="entry name" value="KINESIN_MOTOR_1"/>
    <property type="match status" value="1"/>
</dbReference>
<dbReference type="PROSITE" id="PS50067">
    <property type="entry name" value="KINESIN_MOTOR_2"/>
    <property type="match status" value="1"/>
</dbReference>
<evidence type="ECO:0000250" key="1"/>
<evidence type="ECO:0000255" key="2"/>
<evidence type="ECO:0000255" key="3">
    <source>
        <dbReference type="PROSITE-ProRule" id="PRU00283"/>
    </source>
</evidence>
<evidence type="ECO:0000256" key="4">
    <source>
        <dbReference type="SAM" id="MobiDB-lite"/>
    </source>
</evidence>
<evidence type="ECO:0000269" key="5">
    <source>
    </source>
</evidence>
<organism>
    <name type="scientific">Strongylocentrotus purpuratus</name>
    <name type="common">Purple sea urchin</name>
    <dbReference type="NCBI Taxonomy" id="7668"/>
    <lineage>
        <taxon>Eukaryota</taxon>
        <taxon>Metazoa</taxon>
        <taxon>Echinodermata</taxon>
        <taxon>Eleutherozoa</taxon>
        <taxon>Echinozoa</taxon>
        <taxon>Echinoidea</taxon>
        <taxon>Euechinoidea</taxon>
        <taxon>Echinacea</taxon>
        <taxon>Camarodonta</taxon>
        <taxon>Echinidea</taxon>
        <taxon>Strongylocentrotidae</taxon>
        <taxon>Strongylocentrotus</taxon>
    </lineage>
</organism>
<name>KIF15_STRPU</name>
<reference key="1">
    <citation type="journal article" date="2000" name="J. Cell Biol.">
        <title>A kinesin-related protein, KRP(180), positions prometaphase spindle poles during early sea urchin embryonic cell division.</title>
        <authorList>
            <person name="Rogers G.C."/>
            <person name="Chui K.K."/>
            <person name="Lee E.W."/>
            <person name="Wedaman K.P."/>
            <person name="Sharp D.J."/>
            <person name="Holland G."/>
            <person name="Morris R.L."/>
            <person name="Scholey J.M."/>
        </authorList>
    </citation>
    <scope>NUCLEOTIDE SEQUENCE [MRNA]</scope>
    <scope>FUNCTION</scope>
    <scope>SUBUNIT</scope>
    <scope>SUBCELLULAR LOCATION</scope>
</reference>
<feature type="chain" id="PRO_0000328687" description="Kinesin-like protein KIF15">
    <location>
        <begin position="1"/>
        <end position="1463"/>
    </location>
</feature>
<feature type="domain" description="Kinesin motor" evidence="3">
    <location>
        <begin position="18"/>
        <end position="354"/>
    </location>
</feature>
<feature type="region of interest" description="Disordered" evidence="4">
    <location>
        <begin position="387"/>
        <end position="424"/>
    </location>
</feature>
<feature type="region of interest" description="Disordered" evidence="4">
    <location>
        <begin position="686"/>
        <end position="720"/>
    </location>
</feature>
<feature type="region of interest" description="Disordered" evidence="4">
    <location>
        <begin position="1335"/>
        <end position="1356"/>
    </location>
</feature>
<feature type="region of interest" description="Disordered" evidence="4">
    <location>
        <begin position="1409"/>
        <end position="1444"/>
    </location>
</feature>
<feature type="coiled-coil region" evidence="2">
    <location>
        <begin position="436"/>
        <end position="517"/>
    </location>
</feature>
<feature type="coiled-coil region" evidence="2">
    <location>
        <begin position="586"/>
        <end position="646"/>
    </location>
</feature>
<feature type="compositionally biased region" description="Polar residues" evidence="4">
    <location>
        <begin position="398"/>
        <end position="414"/>
    </location>
</feature>
<feature type="compositionally biased region" description="Low complexity" evidence="4">
    <location>
        <begin position="415"/>
        <end position="424"/>
    </location>
</feature>
<feature type="compositionally biased region" description="Polar residues" evidence="4">
    <location>
        <begin position="701"/>
        <end position="715"/>
    </location>
</feature>
<feature type="compositionally biased region" description="Basic and acidic residues" evidence="4">
    <location>
        <begin position="1418"/>
        <end position="1428"/>
    </location>
</feature>
<feature type="binding site" evidence="3">
    <location>
        <begin position="99"/>
        <end position="106"/>
    </location>
    <ligand>
        <name>ATP</name>
        <dbReference type="ChEBI" id="CHEBI:30616"/>
    </ligand>
</feature>
<protein>
    <recommendedName>
        <fullName>Kinesin-like protein KIF15</fullName>
    </recommendedName>
    <alternativeName>
        <fullName>Kinesin-related protein KRP180</fullName>
    </alternativeName>
</protein>
<accession>Q9GYZ0</accession>
<comment type="function">
    <text evidence="5">Plus-end directed kinesin-like motor enzyme involved in mitotic spindle assembly. Plays a role in positioning spindle poles during mitosis, specifically at prometaphase.</text>
</comment>
<comment type="subunit">
    <text evidence="5">Homodimer.</text>
</comment>
<comment type="subcellular location">
    <subcellularLocation>
        <location evidence="1">Cytoplasm</location>
    </subcellularLocation>
    <subcellularLocation>
        <location evidence="5">Cytoplasm</location>
        <location evidence="5">Cytoskeleton</location>
        <location evidence="5">Spindle</location>
    </subcellularLocation>
    <text>Localizes at the central spindle.</text>
</comment>
<comment type="developmental stage">
    <text>Expressed in eggs.</text>
</comment>
<comment type="similarity">
    <text evidence="3">Belongs to the TRAFAC class myosin-kinesin ATPase superfamily. Kinesin family. KLP2 subfamily.</text>
</comment>
<sequence length="1463" mass="166590">MSKKLKEQAANDASEGDAIKVFVRVRPSESHDADAAFGQCLEVRLPDTIIMHSKPEPKVFTYDHVTAANTTQESVFTAVGKRIIESCVGGFNGTIFAYGQTGSGKTFTMLGPCEDGDNFHHEMRGVIPRSFEYLFSLVNREREKHGDRYEFLCRCSFLEIYNEQIYDLLDPASLGLHLRENMKKGVFVDGLIERAVASASEAYGVLQAGWHNRRVAATSMNRESSRSHAVFTVSIESKEKKAGVSNIRVSQLHLVDLAGSERQKDTKAIGVRLKEAGSINKSLSILGNVIMALVDIAHGKQRHVPYRDSKLSFLLRDSLGGNAKTYIIANVHPDAKCFGETLSTLKFARRAKMIKNRAVVNEDTQGNVMHLQAEIRRLREALCMKGAEGSIPRGPSESGDSQMSNSSTESNGPVSGQQSGSSSSSKWKKYFLEAMSLRDIVEVEKREMREKVSSLEELCSKRDQVISSNKMIIKFRNSTIDMLQKTKNKALLKEDRDLLNENLKKEIEQLQEQLEHNPFVMRYVVENQSLRAQNKKLKMMEAVRSGEAMAATKAEELETLFLELREGLSKNRRYSSTPVDGEKVPTSTLVILKSQIKKLQDELENAKQEHAEQEEMTRTTRLDLESELAAYKKANLDMEKTLQGMKIKNRMDRDAMNDIHMQTIKSITTPKKVTYQLRSRTVLRTAGEETPGGPGFAGLSDNGSPLRSHSTNSLPPSGDILVTNSSPAMSEEGIIDEEMPEHVIEQCNEALTIELQKLQDKNANLQQQLEEHESQKHKMLQNSSKLDHQLQQITELYSTESQAWQEHEKDLTTRLAEATIQISTLQRDYEMTRGEAEDFKVMLQAADKEIGQEKKQKSKVTQDWDRVRAALDAQVVRLENEMCGQSRELENLTEDREQLQDAYNTLQAEHEFQQQREADLENRLKGKKAEITQLQEEIQKHLEKLDSERDKSMRLTAELRQGDNTKKDLLDAQELIDQFREERDDLLHRLDTEALKLSSSKEDLETVNSALTAIKKTDVEQKEALSSLMAALQGQKGMVKDKEEQLASMQMQLEDTRGQVSLLEAALEEGKASGAGLQSQIAALEDRMHAQAGEYQEQIEQMRADAMDANQHQKELLKELEKQSEELTQLHKQMKEKEEEYETKESEHKDTIESLEEQLEEVKTNLSTVVVELDEPESKKRKMADAQAMEIESLRDSEKRFKELSSVYDNMRDQMNEEIRSLKMKADELEDVRISKEILQAQHTALTYEIEQVRNEMAEKESSLKDEVNHLKRDMERQKTVLASMLRDKDEAVEKLYTVQTTLDQVKANEEILQENMDQVMEELDRTSALESTHFKEKEDIKSKLEEEREEKSKLTKDLTRLKEVYEEAEKKITELGGHQNPKQKIHHLQAVKSENYFLKEEVESLEKQLGKAQSDSEQMKRDYEALQKRLTSSSAEPPEEAGATTCIRCLPHSKRIMQTQTA</sequence>
<gene>
    <name type="primary">KIF15</name>
</gene>